<accession>P39516</accession>
<accession>D6VW00</accession>
<organism>
    <name type="scientific">Saccharomyces cerevisiae (strain ATCC 204508 / S288c)</name>
    <name type="common">Baker's yeast</name>
    <dbReference type="NCBI Taxonomy" id="559292"/>
    <lineage>
        <taxon>Eukaryota</taxon>
        <taxon>Fungi</taxon>
        <taxon>Dikarya</taxon>
        <taxon>Ascomycota</taxon>
        <taxon>Saccharomycotina</taxon>
        <taxon>Saccharomycetes</taxon>
        <taxon>Saccharomycetales</taxon>
        <taxon>Saccharomycetaceae</taxon>
        <taxon>Saccharomyces</taxon>
    </lineage>
</organism>
<comment type="function">
    <text evidence="3 8">Component of the ribosome, a large ribonucleoprotein complex responsible for the synthesis of proteins in the cell. The small ribosomal subunit (SSU) binds messenger RNAs (mRNAs) and translates the encoded message by selecting cognate aminoacyl-transfer RNA (tRNA) molecules. The large subunit (LSU) contains the ribosomal catalytic site termed the peptidyl transferase center (PTC), which catalyzes the formation of peptide bonds, thereby polymerizing the amino acids delivered by tRNAs into a polypeptide chain. The nascent polypeptides leave the ribosome through a tunnel in the LSU and interact with protein factors that function in enzymatic processing, targeting, and the membrane insertion of nascent chains at the exit of the ribosomal tunnel (PubMed:22096102). uS11 is involved in nucleolar processing of pre-18S ribosomal RNA and ribosome assembly (PubMed:15590835).</text>
</comment>
<comment type="subunit">
    <text evidence="3 4 9">Component of the small ribosomal subunit (SSU). Mature yeast ribosomes consist of a small (40S) and a large (60S) subunit. The 40S small subunit contains 1 molecule of ribosomal RNA (18S rRNA) and 33 different proteins (encoded by 57 genes). The large 60S subunit contains 3 rRNA molecules (25S, 5.8S and 5S rRNA) and 46 different proteins (encoded by 81 genes). uS11 interacts with eS1 forming part of the mRNA exit tunnel (PubMed:22096102, PubMed:9559554). uS11 interacts with snoRNA U3. uS11 interacts with MPP10. Component of the ribosomal small subunit (SSU) processome composed of at least 40 protein subunits and snoRNA U3 (PubMed:15590835).</text>
</comment>
<comment type="subcellular location">
    <subcellularLocation>
        <location evidence="4">Cytoplasm</location>
    </subcellularLocation>
    <subcellularLocation>
        <location evidence="3">Nucleus</location>
        <location evidence="3">Nucleolus</location>
    </subcellularLocation>
</comment>
<comment type="miscellaneous">
    <text evidence="2">Present with 3370 molecules/cell in log phase SD medium.</text>
</comment>
<comment type="miscellaneous">
    <text evidence="7">There are 2 genes for uS11 in yeast.</text>
</comment>
<comment type="similarity">
    <text evidence="7">Belongs to the universal ribosomal protein uS11 family.</text>
</comment>
<dbReference type="EMBL" id="L12564">
    <property type="protein sequence ID" value="AAA17764.1"/>
    <property type="molecule type" value="Genomic_DNA"/>
</dbReference>
<dbReference type="EMBL" id="X77688">
    <property type="protein sequence ID" value="CAA54769.1"/>
    <property type="molecule type" value="Genomic_DNA"/>
</dbReference>
<dbReference type="EMBL" id="Z49466">
    <property type="protein sequence ID" value="CAA89486.1"/>
    <property type="molecule type" value="Genomic_DNA"/>
</dbReference>
<dbReference type="EMBL" id="BK006943">
    <property type="protein sequence ID" value="DAA08616.1"/>
    <property type="molecule type" value="Genomic_DNA"/>
</dbReference>
<dbReference type="PIR" id="S46643">
    <property type="entry name" value="S46643"/>
</dbReference>
<dbReference type="RefSeq" id="NP_012344.1">
    <property type="nucleotide sequence ID" value="NM_001181624.1"/>
</dbReference>
<dbReference type="PDB" id="5I4L">
    <property type="method" value="X-ray"/>
    <property type="resolution" value="3.10 A"/>
    <property type="chains" value="C4/c4=11-138"/>
</dbReference>
<dbReference type="PDB" id="5MEI">
    <property type="method" value="X-ray"/>
    <property type="resolution" value="3.50 A"/>
    <property type="chains" value="P/c4=11-138"/>
</dbReference>
<dbReference type="PDB" id="5NDV">
    <property type="method" value="X-ray"/>
    <property type="resolution" value="3.30 A"/>
    <property type="chains" value="C4/c4=11-138"/>
</dbReference>
<dbReference type="PDB" id="5NDW">
    <property type="method" value="X-ray"/>
    <property type="resolution" value="3.70 A"/>
    <property type="chains" value="C4/c4=11-138"/>
</dbReference>
<dbReference type="PDB" id="5OBM">
    <property type="method" value="X-ray"/>
    <property type="resolution" value="3.40 A"/>
    <property type="chains" value="C4/c4=11-138"/>
</dbReference>
<dbReference type="PDB" id="5ON6">
    <property type="method" value="X-ray"/>
    <property type="resolution" value="3.10 A"/>
    <property type="chains" value="P/c4=11-138"/>
</dbReference>
<dbReference type="PDB" id="5TBW">
    <property type="method" value="X-ray"/>
    <property type="resolution" value="3.00 A"/>
    <property type="chains" value="P/c4=11-138"/>
</dbReference>
<dbReference type="PDB" id="5TGA">
    <property type="method" value="X-ray"/>
    <property type="resolution" value="3.30 A"/>
    <property type="chains" value="C4/c4=11-138"/>
</dbReference>
<dbReference type="PDB" id="6GQ1">
    <property type="method" value="EM"/>
    <property type="resolution" value="4.40 A"/>
    <property type="chains" value="AE=12-138"/>
</dbReference>
<dbReference type="PDB" id="6GQB">
    <property type="method" value="EM"/>
    <property type="resolution" value="3.90 A"/>
    <property type="chains" value="AE=12-138"/>
</dbReference>
<dbReference type="PDB" id="6GQV">
    <property type="method" value="EM"/>
    <property type="resolution" value="4.00 A"/>
    <property type="chains" value="AE=12-138"/>
</dbReference>
<dbReference type="PDB" id="6HHQ">
    <property type="method" value="X-ray"/>
    <property type="resolution" value="3.10 A"/>
    <property type="chains" value="P/c4=1-138"/>
</dbReference>
<dbReference type="PDB" id="6I7O">
    <property type="method" value="EM"/>
    <property type="resolution" value="5.30 A"/>
    <property type="chains" value="Z/Zb=11-138"/>
</dbReference>
<dbReference type="PDB" id="6Q8Y">
    <property type="method" value="EM"/>
    <property type="resolution" value="3.10 A"/>
    <property type="chains" value="Z=12-138"/>
</dbReference>
<dbReference type="PDB" id="6T4Q">
    <property type="method" value="EM"/>
    <property type="resolution" value="2.60 A"/>
    <property type="chains" value="SO=12-138"/>
</dbReference>
<dbReference type="PDB" id="6TB3">
    <property type="method" value="EM"/>
    <property type="resolution" value="2.80 A"/>
    <property type="chains" value="Z=12-138"/>
</dbReference>
<dbReference type="PDB" id="6TNU">
    <property type="method" value="EM"/>
    <property type="resolution" value="3.10 A"/>
    <property type="chains" value="Z=12-138"/>
</dbReference>
<dbReference type="PDB" id="6WOO">
    <property type="method" value="EM"/>
    <property type="resolution" value="2.90 A"/>
    <property type="chains" value="OO=12-138"/>
</dbReference>
<dbReference type="PDB" id="6XIQ">
    <property type="method" value="EM"/>
    <property type="resolution" value="4.20 A"/>
    <property type="chains" value="AE=1-138"/>
</dbReference>
<dbReference type="PDB" id="6XIR">
    <property type="method" value="EM"/>
    <property type="resolution" value="3.20 A"/>
    <property type="chains" value="AE=1-138"/>
</dbReference>
<dbReference type="PDB" id="6ZVI">
    <property type="method" value="EM"/>
    <property type="resolution" value="3.00 A"/>
    <property type="chains" value="w=11-138"/>
</dbReference>
<dbReference type="PDB" id="7A1G">
    <property type="method" value="EM"/>
    <property type="resolution" value="3.00 A"/>
    <property type="chains" value="Z=12-138"/>
</dbReference>
<dbReference type="PDB" id="7B7D">
    <property type="method" value="EM"/>
    <property type="resolution" value="3.30 A"/>
    <property type="chains" value="Z=12-138"/>
</dbReference>
<dbReference type="PDB" id="7NRC">
    <property type="method" value="EM"/>
    <property type="resolution" value="3.90 A"/>
    <property type="chains" value="SZ=12-138"/>
</dbReference>
<dbReference type="PDB" id="7NRD">
    <property type="method" value="EM"/>
    <property type="resolution" value="4.36 A"/>
    <property type="chains" value="SZ=11-138"/>
</dbReference>
<dbReference type="PDB" id="7SUK">
    <property type="method" value="EM"/>
    <property type="resolution" value="3.99 A"/>
    <property type="chains" value="NG=11-121"/>
</dbReference>
<dbReference type="PDB" id="7ZPQ">
    <property type="method" value="EM"/>
    <property type="resolution" value="3.47 A"/>
    <property type="chains" value="AO=12-138"/>
</dbReference>
<dbReference type="PDB" id="7ZRS">
    <property type="method" value="EM"/>
    <property type="resolution" value="4.80 A"/>
    <property type="chains" value="AO=12-138"/>
</dbReference>
<dbReference type="PDB" id="7ZUW">
    <property type="method" value="EM"/>
    <property type="resolution" value="4.30 A"/>
    <property type="chains" value="AO=12-138"/>
</dbReference>
<dbReference type="PDB" id="7ZUX">
    <property type="method" value="EM"/>
    <property type="resolution" value="2.50 A"/>
    <property type="chains" value="DO=12-138"/>
</dbReference>
<dbReference type="PDB" id="8BN3">
    <property type="method" value="EM"/>
    <property type="resolution" value="2.40 A"/>
    <property type="chains" value="C4=12-138"/>
</dbReference>
<dbReference type="PDB" id="8BQD">
    <property type="method" value="EM"/>
    <property type="resolution" value="3.90 A"/>
    <property type="chains" value="Z=12-138"/>
</dbReference>
<dbReference type="PDB" id="8BQX">
    <property type="method" value="EM"/>
    <property type="resolution" value="3.80 A"/>
    <property type="chains" value="Z=12-138"/>
</dbReference>
<dbReference type="PDB" id="8P4V">
    <property type="method" value="X-ray"/>
    <property type="resolution" value="3.16 A"/>
    <property type="chains" value="P/c4=1-138"/>
</dbReference>
<dbReference type="PDB" id="8XU8">
    <property type="method" value="EM"/>
    <property type="resolution" value="3.40 A"/>
    <property type="chains" value="SZ=12-138"/>
</dbReference>
<dbReference type="PDB" id="8Y0U">
    <property type="method" value="EM"/>
    <property type="resolution" value="3.59 A"/>
    <property type="chains" value="SO=1-138"/>
</dbReference>
<dbReference type="PDB" id="8YLD">
    <property type="method" value="EM"/>
    <property type="resolution" value="3.90 A"/>
    <property type="chains" value="SZ=12-138"/>
</dbReference>
<dbReference type="PDB" id="8YLR">
    <property type="method" value="EM"/>
    <property type="resolution" value="3.90 A"/>
    <property type="chains" value="SZ=12-138"/>
</dbReference>
<dbReference type="PDB" id="8Z70">
    <property type="method" value="EM"/>
    <property type="resolution" value="3.20 A"/>
    <property type="chains" value="SZ=12-138"/>
</dbReference>
<dbReference type="PDB" id="8Z71">
    <property type="method" value="EM"/>
    <property type="resolution" value="3.60 A"/>
    <property type="chains" value="SZ=12-138"/>
</dbReference>
<dbReference type="PDB" id="9F9S">
    <property type="method" value="EM"/>
    <property type="resolution" value="2.90 A"/>
    <property type="chains" value="Ro=1-138"/>
</dbReference>
<dbReference type="PDBsum" id="5I4L"/>
<dbReference type="PDBsum" id="5MEI"/>
<dbReference type="PDBsum" id="5NDV"/>
<dbReference type="PDBsum" id="5NDW"/>
<dbReference type="PDBsum" id="5OBM"/>
<dbReference type="PDBsum" id="5ON6"/>
<dbReference type="PDBsum" id="5TBW"/>
<dbReference type="PDBsum" id="5TGA"/>
<dbReference type="PDBsum" id="6GQ1"/>
<dbReference type="PDBsum" id="6GQB"/>
<dbReference type="PDBsum" id="6GQV"/>
<dbReference type="PDBsum" id="6HHQ"/>
<dbReference type="PDBsum" id="6I7O"/>
<dbReference type="PDBsum" id="6Q8Y"/>
<dbReference type="PDBsum" id="6T4Q"/>
<dbReference type="PDBsum" id="6TB3"/>
<dbReference type="PDBsum" id="6TNU"/>
<dbReference type="PDBsum" id="6WOO"/>
<dbReference type="PDBsum" id="6XIQ"/>
<dbReference type="PDBsum" id="6XIR"/>
<dbReference type="PDBsum" id="6ZVI"/>
<dbReference type="PDBsum" id="7A1G"/>
<dbReference type="PDBsum" id="7B7D"/>
<dbReference type="PDBsum" id="7NRC"/>
<dbReference type="PDBsum" id="7NRD"/>
<dbReference type="PDBsum" id="7SUK"/>
<dbReference type="PDBsum" id="7ZPQ"/>
<dbReference type="PDBsum" id="7ZRS"/>
<dbReference type="PDBsum" id="7ZUW"/>
<dbReference type="PDBsum" id="7ZUX"/>
<dbReference type="PDBsum" id="8BN3"/>
<dbReference type="PDBsum" id="8BQD"/>
<dbReference type="PDBsum" id="8BQX"/>
<dbReference type="PDBsum" id="8P4V"/>
<dbReference type="PDBsum" id="8XU8"/>
<dbReference type="PDBsum" id="8Y0U"/>
<dbReference type="PDBsum" id="8YLD"/>
<dbReference type="PDBsum" id="8YLR"/>
<dbReference type="PDBsum" id="8Z70"/>
<dbReference type="PDBsum" id="8Z71"/>
<dbReference type="PDBsum" id="9F9S"/>
<dbReference type="EMDB" id="EMD-0047"/>
<dbReference type="EMDB" id="EMD-0048"/>
<dbReference type="EMDB" id="EMD-0049"/>
<dbReference type="EMDB" id="EMD-10377"/>
<dbReference type="EMDB" id="EMD-10397"/>
<dbReference type="EMDB" id="EMD-10431"/>
<dbReference type="EMDB" id="EMD-10537"/>
<dbReference type="EMDB" id="EMD-11457"/>
<dbReference type="EMDB" id="EMD-11608"/>
<dbReference type="EMDB" id="EMD-12081"/>
<dbReference type="EMDB" id="EMD-12534"/>
<dbReference type="EMDB" id="EMD-12535"/>
<dbReference type="EMDB" id="EMD-14861"/>
<dbReference type="EMDB" id="EMD-14921"/>
<dbReference type="EMDB" id="EMD-14978"/>
<dbReference type="EMDB" id="EMD-14979"/>
<dbReference type="EMDB" id="EMD-16127"/>
<dbReference type="EMDB" id="EMD-16182"/>
<dbReference type="EMDB" id="EMD-16191"/>
<dbReference type="EMDB" id="EMD-21859"/>
<dbReference type="EMDB" id="EMD-22196"/>
<dbReference type="EMDB" id="EMD-22198"/>
<dbReference type="EMDB" id="EMD-25441"/>
<dbReference type="EMDB" id="EMD-38660"/>
<dbReference type="EMDB" id="EMD-4427"/>
<dbReference type="EMDB" id="EMD-4474"/>
<dbReference type="EMDB" id="EMD-50259"/>
<dbReference type="SMR" id="P39516"/>
<dbReference type="BioGRID" id="33572">
    <property type="interactions" value="149"/>
</dbReference>
<dbReference type="ComplexPortal" id="CPX-1599">
    <property type="entry name" value="40S cytosolic small ribosomal subunit"/>
</dbReference>
<dbReference type="DIP" id="DIP-5688N"/>
<dbReference type="FunCoup" id="P39516">
    <property type="interactions" value="1254"/>
</dbReference>
<dbReference type="IntAct" id="P39516">
    <property type="interactions" value="58"/>
</dbReference>
<dbReference type="MINT" id="P39516"/>
<dbReference type="STRING" id="4932.YJL191W"/>
<dbReference type="iPTMnet" id="P39516"/>
<dbReference type="PaxDb" id="4932-YJL191W"/>
<dbReference type="PeptideAtlas" id="P39516"/>
<dbReference type="EnsemblFungi" id="YJL191W_mRNA">
    <property type="protein sequence ID" value="YJL191W"/>
    <property type="gene ID" value="YJL191W"/>
</dbReference>
<dbReference type="GeneID" id="853248"/>
<dbReference type="KEGG" id="sce:YJL191W"/>
<dbReference type="AGR" id="SGD:S000003727"/>
<dbReference type="SGD" id="S000003727">
    <property type="gene designation" value="RPS14B"/>
</dbReference>
<dbReference type="VEuPathDB" id="FungiDB:YJL191W"/>
<dbReference type="eggNOG" id="KOG0407">
    <property type="taxonomic scope" value="Eukaryota"/>
</dbReference>
<dbReference type="GeneTree" id="ENSGT00390000000703"/>
<dbReference type="HOGENOM" id="CLU_072439_6_0_1"/>
<dbReference type="InParanoid" id="P39516"/>
<dbReference type="OMA" id="KWGVAHI"/>
<dbReference type="OrthoDB" id="1677536at2759"/>
<dbReference type="BioCyc" id="YEAST:G3O-31623-MONOMER"/>
<dbReference type="Reactome" id="R-SCE-156827">
    <property type="pathway name" value="L13a-mediated translational silencing of Ceruloplasmin expression"/>
</dbReference>
<dbReference type="Reactome" id="R-SCE-1799339">
    <property type="pathway name" value="SRP-dependent cotranslational protein targeting to membrane"/>
</dbReference>
<dbReference type="Reactome" id="R-SCE-6791226">
    <property type="pathway name" value="Major pathway of rRNA processing in the nucleolus and cytosol"/>
</dbReference>
<dbReference type="Reactome" id="R-SCE-72649">
    <property type="pathway name" value="Translation initiation complex formation"/>
</dbReference>
<dbReference type="Reactome" id="R-SCE-72689">
    <property type="pathway name" value="Formation of a pool of free 40S subunits"/>
</dbReference>
<dbReference type="Reactome" id="R-SCE-72695">
    <property type="pathway name" value="Formation of the ternary complex, and subsequently, the 43S complex"/>
</dbReference>
<dbReference type="Reactome" id="R-SCE-72702">
    <property type="pathway name" value="Ribosomal scanning and start codon recognition"/>
</dbReference>
<dbReference type="Reactome" id="R-SCE-72706">
    <property type="pathway name" value="GTP hydrolysis and joining of the 60S ribosomal subunit"/>
</dbReference>
<dbReference type="Reactome" id="R-SCE-975956">
    <property type="pathway name" value="Nonsense Mediated Decay (NMD) independent of the Exon Junction Complex (EJC)"/>
</dbReference>
<dbReference type="Reactome" id="R-SCE-975957">
    <property type="pathway name" value="Nonsense Mediated Decay (NMD) enhanced by the Exon Junction Complex (EJC)"/>
</dbReference>
<dbReference type="BioGRID-ORCS" id="853248">
    <property type="hits" value="5 hits in 10 CRISPR screens"/>
</dbReference>
<dbReference type="CD-CODE" id="BDAE0F88">
    <property type="entry name" value="Nucleolus"/>
</dbReference>
<dbReference type="PRO" id="PR:P39516"/>
<dbReference type="Proteomes" id="UP000002311">
    <property type="component" value="Chromosome X"/>
</dbReference>
<dbReference type="RNAct" id="P39516">
    <property type="molecule type" value="protein"/>
</dbReference>
<dbReference type="GO" id="GO:0005829">
    <property type="term" value="C:cytosol"/>
    <property type="evidence" value="ECO:0000304"/>
    <property type="project" value="Reactome"/>
</dbReference>
<dbReference type="GO" id="GO:0022627">
    <property type="term" value="C:cytosolic small ribosomal subunit"/>
    <property type="evidence" value="ECO:0000318"/>
    <property type="project" value="GO_Central"/>
</dbReference>
<dbReference type="GO" id="GO:0005730">
    <property type="term" value="C:nucleolus"/>
    <property type="evidence" value="ECO:0007669"/>
    <property type="project" value="UniProtKB-SubCell"/>
</dbReference>
<dbReference type="GO" id="GO:0032040">
    <property type="term" value="C:small-subunit processome"/>
    <property type="evidence" value="ECO:0000314"/>
    <property type="project" value="SGD"/>
</dbReference>
<dbReference type="GO" id="GO:0003723">
    <property type="term" value="F:RNA binding"/>
    <property type="evidence" value="ECO:0000314"/>
    <property type="project" value="UniProtKB"/>
</dbReference>
<dbReference type="GO" id="GO:0070181">
    <property type="term" value="F:small ribosomal subunit rRNA binding"/>
    <property type="evidence" value="ECO:0000314"/>
    <property type="project" value="SGD"/>
</dbReference>
<dbReference type="GO" id="GO:0003735">
    <property type="term" value="F:structural constituent of ribosome"/>
    <property type="evidence" value="ECO:0000318"/>
    <property type="project" value="GO_Central"/>
</dbReference>
<dbReference type="GO" id="GO:0002181">
    <property type="term" value="P:cytoplasmic translation"/>
    <property type="evidence" value="ECO:0000303"/>
    <property type="project" value="SGD"/>
</dbReference>
<dbReference type="GO" id="GO:0030490">
    <property type="term" value="P:maturation of SSU-rRNA"/>
    <property type="evidence" value="ECO:0000315"/>
    <property type="project" value="UniProtKB"/>
</dbReference>
<dbReference type="GO" id="GO:0000462">
    <property type="term" value="P:maturation of SSU-rRNA from tricistronic rRNA transcript (SSU-rRNA, 5.8S rRNA, LSU-rRNA)"/>
    <property type="evidence" value="ECO:0000315"/>
    <property type="project" value="SGD"/>
</dbReference>
<dbReference type="GO" id="GO:0000028">
    <property type="term" value="P:ribosomal small subunit assembly"/>
    <property type="evidence" value="ECO:0000315"/>
    <property type="project" value="UniProtKB"/>
</dbReference>
<dbReference type="GO" id="GO:0006412">
    <property type="term" value="P:translation"/>
    <property type="evidence" value="ECO:0000318"/>
    <property type="project" value="GO_Central"/>
</dbReference>
<dbReference type="FunFam" id="3.30.420.80:FF:000002">
    <property type="entry name" value="40S ribosomal protein S14"/>
    <property type="match status" value="1"/>
</dbReference>
<dbReference type="Gene3D" id="3.30.420.80">
    <property type="entry name" value="Ribosomal protein S11"/>
    <property type="match status" value="1"/>
</dbReference>
<dbReference type="HAMAP" id="MF_01310">
    <property type="entry name" value="Ribosomal_uS11"/>
    <property type="match status" value="1"/>
</dbReference>
<dbReference type="InterPro" id="IPR001971">
    <property type="entry name" value="Ribosomal_uS11"/>
</dbReference>
<dbReference type="InterPro" id="IPR018102">
    <property type="entry name" value="Ribosomal_uS11_CS"/>
</dbReference>
<dbReference type="InterPro" id="IPR036967">
    <property type="entry name" value="Ribosomal_uS11_sf"/>
</dbReference>
<dbReference type="NCBIfam" id="NF007176">
    <property type="entry name" value="PRK09607.1"/>
    <property type="match status" value="1"/>
</dbReference>
<dbReference type="PANTHER" id="PTHR11759">
    <property type="entry name" value="40S RIBOSOMAL PROTEIN S14/30S RIBOSOMAL PROTEIN S11"/>
    <property type="match status" value="1"/>
</dbReference>
<dbReference type="Pfam" id="PF00411">
    <property type="entry name" value="Ribosomal_S11"/>
    <property type="match status" value="1"/>
</dbReference>
<dbReference type="PIRSF" id="PIRSF002131">
    <property type="entry name" value="Ribosomal_S11"/>
    <property type="match status" value="1"/>
</dbReference>
<dbReference type="SUPFAM" id="SSF53137">
    <property type="entry name" value="Translational machinery components"/>
    <property type="match status" value="1"/>
</dbReference>
<dbReference type="PROSITE" id="PS00054">
    <property type="entry name" value="RIBOSOMAL_S11"/>
    <property type="match status" value="1"/>
</dbReference>
<sequence length="138" mass="14650">MANDLVQARDNSQVFGVARIYASFNDTFVHVTDLSGKETIARVTGGMKVKADRDESSPYAAMLAAQDVAAKCKEVGITAVHVKIRATGGTRTKTPGPGGQAALRALARSGLRIGRIEDVTPVPSDSTRKKGGRRGRRL</sequence>
<name>RS14B_YEAST</name>
<keyword id="KW-0002">3D-structure</keyword>
<keyword id="KW-0963">Cytoplasm</keyword>
<keyword id="KW-0539">Nucleus</keyword>
<keyword id="KW-1185">Reference proteome</keyword>
<keyword id="KW-0687">Ribonucleoprotein</keyword>
<keyword id="KW-0689">Ribosomal protein</keyword>
<keyword id="KW-0690">Ribosome biogenesis</keyword>
<keyword id="KW-0698">rRNA processing</keyword>
<feature type="chain" id="PRO_0000123360" description="Small ribosomal subunit protein uS11B">
    <location>
        <begin position="1"/>
        <end position="138"/>
    </location>
</feature>
<feature type="region of interest" description="Disordered" evidence="1">
    <location>
        <begin position="118"/>
        <end position="138"/>
    </location>
</feature>
<feature type="compositionally biased region" description="Basic residues" evidence="1">
    <location>
        <begin position="129"/>
        <end position="138"/>
    </location>
</feature>
<feature type="sequence conflict" description="In Ref. 2; CAA54769." evidence="7" ref="2">
    <original>N</original>
    <variation>K</variation>
    <location>
        <position position="3"/>
    </location>
</feature>
<feature type="strand" evidence="10">
    <location>
        <begin position="15"/>
        <end position="22"/>
    </location>
</feature>
<feature type="strand" evidence="10">
    <location>
        <begin position="27"/>
        <end position="32"/>
    </location>
</feature>
<feature type="strand" evidence="10">
    <location>
        <begin position="34"/>
        <end position="38"/>
    </location>
</feature>
<feature type="strand" evidence="10">
    <location>
        <begin position="41"/>
        <end position="44"/>
    </location>
</feature>
<feature type="helix" evidence="10">
    <location>
        <begin position="45"/>
        <end position="47"/>
    </location>
</feature>
<feature type="strand" evidence="10">
    <location>
        <begin position="51"/>
        <end position="54"/>
    </location>
</feature>
<feature type="helix" evidence="10">
    <location>
        <begin position="58"/>
        <end position="75"/>
    </location>
</feature>
<feature type="strand" evidence="10">
    <location>
        <begin position="79"/>
        <end position="85"/>
    </location>
</feature>
<feature type="helix" evidence="10">
    <location>
        <begin position="98"/>
        <end position="108"/>
    </location>
</feature>
<feature type="strand" evidence="10">
    <location>
        <begin position="112"/>
        <end position="118"/>
    </location>
</feature>
<feature type="strand" evidence="10">
    <location>
        <begin position="132"/>
        <end position="134"/>
    </location>
</feature>
<protein>
    <recommendedName>
        <fullName evidence="5">Small ribosomal subunit protein uS11B</fullName>
    </recommendedName>
    <alternativeName>
        <fullName evidence="6">40S ribosomal protein S14-B</fullName>
    </alternativeName>
    <alternativeName>
        <fullName>RP59B</fullName>
    </alternativeName>
</protein>
<evidence type="ECO:0000256" key="1">
    <source>
        <dbReference type="SAM" id="MobiDB-lite"/>
    </source>
</evidence>
<evidence type="ECO:0000269" key="2">
    <source>
    </source>
</evidence>
<evidence type="ECO:0000269" key="3">
    <source>
    </source>
</evidence>
<evidence type="ECO:0000269" key="4">
    <source>
    </source>
</evidence>
<evidence type="ECO:0000303" key="5">
    <source>
    </source>
</evidence>
<evidence type="ECO:0000303" key="6">
    <source>
    </source>
</evidence>
<evidence type="ECO:0000305" key="7"/>
<evidence type="ECO:0000305" key="8">
    <source>
    </source>
</evidence>
<evidence type="ECO:0000305" key="9">
    <source>
    </source>
</evidence>
<evidence type="ECO:0007829" key="10">
    <source>
        <dbReference type="PDB" id="6ZVI"/>
    </source>
</evidence>
<proteinExistence type="evidence at protein level"/>
<reference key="1">
    <citation type="journal article" date="1993" name="Genetics">
        <title>Molecular genetics of cryptopleurine resistance in Saccharomyces cerevisiae: expression of a ribosomal protein gene family.</title>
        <authorList>
            <person name="Paulovich A.G."/>
            <person name="Thompson J.R."/>
            <person name="Larkin J.C."/>
            <person name="Li Z."/>
            <person name="Woolford J.L. Jr."/>
        </authorList>
    </citation>
    <scope>NUCLEOTIDE SEQUENCE [GENOMIC DNA]</scope>
</reference>
<reference key="2">
    <citation type="journal article" date="1994" name="Yeast">
        <title>The sequence of a 36 kb segment on the left arm of yeast chromosome X identifies 24 open reading frames including NUC1, PRP21 (SPP91), CDC6, CRY2, the gene for S24, a homologue to the aconitase gene ACO1 and two homologues to chromosome III genes.</title>
        <authorList>
            <person name="Purnelle B."/>
            <person name="Coster F."/>
            <person name="Goffeau A."/>
        </authorList>
    </citation>
    <scope>NUCLEOTIDE SEQUENCE [GENOMIC DNA]</scope>
    <source>
        <strain>ATCC 204508 / S288c</strain>
    </source>
</reference>
<reference key="3">
    <citation type="journal article" date="1996" name="EMBO J.">
        <title>Complete nucleotide sequence of Saccharomyces cerevisiae chromosome X.</title>
        <authorList>
            <person name="Galibert F."/>
            <person name="Alexandraki D."/>
            <person name="Baur A."/>
            <person name="Boles E."/>
            <person name="Chalwatzis N."/>
            <person name="Chuat J.-C."/>
            <person name="Coster F."/>
            <person name="Cziepluch C."/>
            <person name="de Haan M."/>
            <person name="Domdey H."/>
            <person name="Durand P."/>
            <person name="Entian K.-D."/>
            <person name="Gatius M."/>
            <person name="Goffeau A."/>
            <person name="Grivell L.A."/>
            <person name="Hennemann A."/>
            <person name="Herbert C.J."/>
            <person name="Heumann K."/>
            <person name="Hilger F."/>
            <person name="Hollenberg C.P."/>
            <person name="Huang M.-E."/>
            <person name="Jacq C."/>
            <person name="Jauniaux J.-C."/>
            <person name="Katsoulou C."/>
            <person name="Kirchrath L."/>
            <person name="Kleine K."/>
            <person name="Kordes E."/>
            <person name="Koetter P."/>
            <person name="Liebl S."/>
            <person name="Louis E.J."/>
            <person name="Manus V."/>
            <person name="Mewes H.-W."/>
            <person name="Miosga T."/>
            <person name="Obermaier B."/>
            <person name="Perea J."/>
            <person name="Pohl T.M."/>
            <person name="Portetelle D."/>
            <person name="Pujol A."/>
            <person name="Purnelle B."/>
            <person name="Ramezani Rad M."/>
            <person name="Rasmussen S.W."/>
            <person name="Rose M."/>
            <person name="Rossau R."/>
            <person name="Schaaff-Gerstenschlaeger I."/>
            <person name="Smits P.H.M."/>
            <person name="Scarcez T."/>
            <person name="Soriano N."/>
            <person name="To Van D."/>
            <person name="Tzermia M."/>
            <person name="Van Broekhoven A."/>
            <person name="Vandenbol M."/>
            <person name="Wedler H."/>
            <person name="von Wettstein D."/>
            <person name="Wambutt R."/>
            <person name="Zagulski M."/>
            <person name="Zollner A."/>
            <person name="Karpfinger-Hartl L."/>
        </authorList>
    </citation>
    <scope>NUCLEOTIDE SEQUENCE [LARGE SCALE GENOMIC DNA]</scope>
    <source>
        <strain>ATCC 204508 / S288c</strain>
    </source>
</reference>
<reference key="4">
    <citation type="journal article" date="2014" name="G3 (Bethesda)">
        <title>The reference genome sequence of Saccharomyces cerevisiae: Then and now.</title>
        <authorList>
            <person name="Engel S.R."/>
            <person name="Dietrich F.S."/>
            <person name="Fisk D.G."/>
            <person name="Binkley G."/>
            <person name="Balakrishnan R."/>
            <person name="Costanzo M.C."/>
            <person name="Dwight S.S."/>
            <person name="Hitz B.C."/>
            <person name="Karra K."/>
            <person name="Nash R.S."/>
            <person name="Weng S."/>
            <person name="Wong E.D."/>
            <person name="Lloyd P."/>
            <person name="Skrzypek M.S."/>
            <person name="Miyasato S.R."/>
            <person name="Simison M."/>
            <person name="Cherry J.M."/>
        </authorList>
    </citation>
    <scope>GENOME REANNOTATION</scope>
    <source>
        <strain>ATCC 204508 / S288c</strain>
    </source>
</reference>
<reference key="5">
    <citation type="journal article" date="1998" name="Yeast">
        <title>The list of cytoplasmic ribosomal proteins of Saccharomyces cerevisiae.</title>
        <authorList>
            <person name="Planta R.J."/>
            <person name="Mager W.H."/>
        </authorList>
    </citation>
    <scope>NOMENCLATURE</scope>
    <scope>SUBUNIT</scope>
</reference>
<reference key="6">
    <citation type="journal article" date="2003" name="Nature">
        <title>Global analysis of protein localization in budding yeast.</title>
        <authorList>
            <person name="Huh W.-K."/>
            <person name="Falvo J.V."/>
            <person name="Gerke L.C."/>
            <person name="Carroll A.S."/>
            <person name="Howson R.W."/>
            <person name="Weissman J.S."/>
            <person name="O'Shea E.K."/>
        </authorList>
    </citation>
    <scope>SUBCELLULAR LOCATION [LARGE SCALE ANALYSIS]</scope>
</reference>
<reference key="7">
    <citation type="journal article" date="2003" name="Nature">
        <title>Global analysis of protein expression in yeast.</title>
        <authorList>
            <person name="Ghaemmaghami S."/>
            <person name="Huh W.-K."/>
            <person name="Bower K."/>
            <person name="Howson R.W."/>
            <person name="Belle A."/>
            <person name="Dephoure N."/>
            <person name="O'Shea E.K."/>
            <person name="Weissman J.S."/>
        </authorList>
    </citation>
    <scope>LEVEL OF PROTEIN EXPRESSION [LARGE SCALE ANALYSIS]</scope>
</reference>
<reference key="8">
    <citation type="journal article" date="2004" name="Eukaryot. Cell">
        <title>The small-subunit processome is a ribosome assembly intermediate.</title>
        <authorList>
            <person name="Bernstein K.A."/>
            <person name="Gallagher J.E.G."/>
            <person name="Mitchell B.M."/>
            <person name="Granneman S."/>
            <person name="Baserga S.J."/>
        </authorList>
    </citation>
    <scope>FUNCTION</scope>
    <scope>INTERACTION WITH MPP10 AND SNORNA U3</scope>
    <scope>IDENTIFICATION IN SSU PROCESSOME</scope>
    <scope>SUBCELLULAR LOCATION</scope>
</reference>
<reference key="9">
    <citation type="journal article" date="2011" name="Science">
        <title>The structure of the eukaryotic ribosome at 3.0 A resolution.</title>
        <authorList>
            <person name="Ben-Shem A."/>
            <person name="Garreau de Loubresse N."/>
            <person name="Melnikov S."/>
            <person name="Jenner L."/>
            <person name="Yusupova G."/>
            <person name="Yusupov M."/>
        </authorList>
    </citation>
    <scope>SUBUNIT</scope>
    <scope>SUBCELLULAR LOCATION</scope>
</reference>
<reference key="10">
    <citation type="journal article" date="2012" name="Proc. Natl. Acad. Sci. U.S.A.">
        <title>N-terminal acetylome analyses and functional insights of the N-terminal acetyltransferase NatB.</title>
        <authorList>
            <person name="Van Damme P."/>
            <person name="Lasa M."/>
            <person name="Polevoda B."/>
            <person name="Gazquez C."/>
            <person name="Elosegui-Artola A."/>
            <person name="Kim D.S."/>
            <person name="De Juan-Pardo E."/>
            <person name="Demeyer K."/>
            <person name="Hole K."/>
            <person name="Larrea E."/>
            <person name="Timmerman E."/>
            <person name="Prieto J."/>
            <person name="Arnesen T."/>
            <person name="Sherman F."/>
            <person name="Gevaert K."/>
            <person name="Aldabe R."/>
        </authorList>
    </citation>
    <scope>IDENTIFICATION BY MASS SPECTROMETRY [LARGE SCALE ANALYSIS]</scope>
</reference>
<reference key="11">
    <citation type="journal article" date="2014" name="Curr. Opin. Struct. Biol.">
        <title>A new system for naming ribosomal proteins.</title>
        <authorList>
            <person name="Ban N."/>
            <person name="Beckmann R."/>
            <person name="Cate J.H.D."/>
            <person name="Dinman J.D."/>
            <person name="Dragon F."/>
            <person name="Ellis S.R."/>
            <person name="Lafontaine D.L.J."/>
            <person name="Lindahl L."/>
            <person name="Liljas A."/>
            <person name="Lipton J.M."/>
            <person name="McAlear M.A."/>
            <person name="Moore P.B."/>
            <person name="Noller H.F."/>
            <person name="Ortega J."/>
            <person name="Panse V.G."/>
            <person name="Ramakrishnan V."/>
            <person name="Spahn C.M.T."/>
            <person name="Steitz T.A."/>
            <person name="Tchorzewski M."/>
            <person name="Tollervey D."/>
            <person name="Warren A.J."/>
            <person name="Williamson J.R."/>
            <person name="Wilson D."/>
            <person name="Yonath A."/>
            <person name="Yusupov M."/>
        </authorList>
    </citation>
    <scope>NOMENCLATURE</scope>
</reference>
<gene>
    <name evidence="6" type="primary">RPS14B</name>
    <name type="synonym">CRY2</name>
    <name type="ordered locus">YJL191W</name>
    <name type="ORF">J0354</name>
</gene>